<keyword id="KW-0028">Amino-acid biosynthesis</keyword>
<keyword id="KW-0963">Cytoplasm</keyword>
<keyword id="KW-0315">Glutamine amidotransferase</keyword>
<keyword id="KW-0368">Histidine biosynthesis</keyword>
<keyword id="KW-0378">Hydrolase</keyword>
<keyword id="KW-0456">Lyase</keyword>
<keyword id="KW-1185">Reference proteome</keyword>
<name>HIS5_STRAW</name>
<comment type="function">
    <text evidence="1">IGPS catalyzes the conversion of PRFAR and glutamine to IGP, AICAR and glutamate. The HisH subunit catalyzes the hydrolysis of glutamine to glutamate and ammonia as part of the synthesis of IGP and AICAR. The resulting ammonia molecule is channeled to the active site of HisF.</text>
</comment>
<comment type="catalytic activity">
    <reaction evidence="1">
        <text>5-[(5-phospho-1-deoxy-D-ribulos-1-ylimino)methylamino]-1-(5-phospho-beta-D-ribosyl)imidazole-4-carboxamide + L-glutamine = D-erythro-1-(imidazol-4-yl)glycerol 3-phosphate + 5-amino-1-(5-phospho-beta-D-ribosyl)imidazole-4-carboxamide + L-glutamate + H(+)</text>
        <dbReference type="Rhea" id="RHEA:24793"/>
        <dbReference type="ChEBI" id="CHEBI:15378"/>
        <dbReference type="ChEBI" id="CHEBI:29985"/>
        <dbReference type="ChEBI" id="CHEBI:58278"/>
        <dbReference type="ChEBI" id="CHEBI:58359"/>
        <dbReference type="ChEBI" id="CHEBI:58475"/>
        <dbReference type="ChEBI" id="CHEBI:58525"/>
        <dbReference type="EC" id="4.3.2.10"/>
    </reaction>
</comment>
<comment type="catalytic activity">
    <reaction evidence="1">
        <text>L-glutamine + H2O = L-glutamate + NH4(+)</text>
        <dbReference type="Rhea" id="RHEA:15889"/>
        <dbReference type="ChEBI" id="CHEBI:15377"/>
        <dbReference type="ChEBI" id="CHEBI:28938"/>
        <dbReference type="ChEBI" id="CHEBI:29985"/>
        <dbReference type="ChEBI" id="CHEBI:58359"/>
        <dbReference type="EC" id="3.5.1.2"/>
    </reaction>
</comment>
<comment type="pathway">
    <text evidence="1">Amino-acid biosynthesis; L-histidine biosynthesis; L-histidine from 5-phospho-alpha-D-ribose 1-diphosphate: step 5/9.</text>
</comment>
<comment type="subunit">
    <text evidence="1">Heterodimer of HisH and HisF.</text>
</comment>
<comment type="subcellular location">
    <subcellularLocation>
        <location evidence="1">Cytoplasm</location>
    </subcellularLocation>
</comment>
<feature type="chain" id="PRO_0000152430" description="Imidazole glycerol phosphate synthase subunit HisH">
    <location>
        <begin position="1"/>
        <end position="215"/>
    </location>
</feature>
<feature type="domain" description="Glutamine amidotransferase type-1" evidence="1">
    <location>
        <begin position="8"/>
        <end position="215"/>
    </location>
</feature>
<feature type="active site" description="Nucleophile" evidence="1">
    <location>
        <position position="86"/>
    </location>
</feature>
<feature type="active site" evidence="1">
    <location>
        <position position="196"/>
    </location>
</feature>
<feature type="active site" evidence="1">
    <location>
        <position position="198"/>
    </location>
</feature>
<sequence>MELSTAKKVVVFDYGFGNVRSAERALARAGAEVEITRDFDTAMNADGLLVPGVGAFAACMKGLKEARGDWIVGRRLAGGRPVMGICVGMQILFERGIEHGVETEGLDEWPGTVGPLEAEIVPHMGWNTVEAPGGSQLFAGLDADARFYFVHSYAVHDWSLDVANPAMRAPLVTWSTHGKPFVAAVENGALWATQFHPEKSGDAGAQLLNNWIGTL</sequence>
<organism>
    <name type="scientific">Streptomyces avermitilis (strain ATCC 31267 / DSM 46492 / JCM 5070 / NBRC 14893 / NCIMB 12804 / NRRL 8165 / MA-4680)</name>
    <dbReference type="NCBI Taxonomy" id="227882"/>
    <lineage>
        <taxon>Bacteria</taxon>
        <taxon>Bacillati</taxon>
        <taxon>Actinomycetota</taxon>
        <taxon>Actinomycetes</taxon>
        <taxon>Kitasatosporales</taxon>
        <taxon>Streptomycetaceae</taxon>
        <taxon>Streptomyces</taxon>
    </lineage>
</organism>
<protein>
    <recommendedName>
        <fullName evidence="1">Imidazole glycerol phosphate synthase subunit HisH</fullName>
        <ecNumber evidence="1">4.3.2.10</ecNumber>
    </recommendedName>
    <alternativeName>
        <fullName evidence="1">IGP synthase glutaminase subunit</fullName>
        <ecNumber evidence="1">3.5.1.2</ecNumber>
    </alternativeName>
    <alternativeName>
        <fullName evidence="1">IGP synthase subunit HisH</fullName>
    </alternativeName>
    <alternativeName>
        <fullName evidence="1">ImGP synthase subunit HisH</fullName>
        <shortName evidence="1">IGPS subunit HisH</shortName>
    </alternativeName>
</protein>
<dbReference type="EC" id="4.3.2.10" evidence="1"/>
<dbReference type="EC" id="3.5.1.2" evidence="1"/>
<dbReference type="EMBL" id="BA000030">
    <property type="protein sequence ID" value="BAC73868.1"/>
    <property type="molecule type" value="Genomic_DNA"/>
</dbReference>
<dbReference type="RefSeq" id="WP_010987558.1">
    <property type="nucleotide sequence ID" value="NZ_JZJK01000089.1"/>
</dbReference>
<dbReference type="SMR" id="Q82AA2"/>
<dbReference type="GeneID" id="41543233"/>
<dbReference type="KEGG" id="sma:SAVERM_6157"/>
<dbReference type="eggNOG" id="COG0118">
    <property type="taxonomic scope" value="Bacteria"/>
</dbReference>
<dbReference type="HOGENOM" id="CLU_071837_1_0_11"/>
<dbReference type="OrthoDB" id="9807137at2"/>
<dbReference type="UniPathway" id="UPA00031">
    <property type="reaction ID" value="UER00010"/>
</dbReference>
<dbReference type="Proteomes" id="UP000000428">
    <property type="component" value="Chromosome"/>
</dbReference>
<dbReference type="GO" id="GO:0005737">
    <property type="term" value="C:cytoplasm"/>
    <property type="evidence" value="ECO:0007669"/>
    <property type="project" value="UniProtKB-SubCell"/>
</dbReference>
<dbReference type="GO" id="GO:0004359">
    <property type="term" value="F:glutaminase activity"/>
    <property type="evidence" value="ECO:0007669"/>
    <property type="project" value="UniProtKB-EC"/>
</dbReference>
<dbReference type="GO" id="GO:0000107">
    <property type="term" value="F:imidazoleglycerol-phosphate synthase activity"/>
    <property type="evidence" value="ECO:0007669"/>
    <property type="project" value="UniProtKB-UniRule"/>
</dbReference>
<dbReference type="GO" id="GO:0016829">
    <property type="term" value="F:lyase activity"/>
    <property type="evidence" value="ECO:0007669"/>
    <property type="project" value="UniProtKB-KW"/>
</dbReference>
<dbReference type="GO" id="GO:0000105">
    <property type="term" value="P:L-histidine biosynthetic process"/>
    <property type="evidence" value="ECO:0007669"/>
    <property type="project" value="UniProtKB-UniRule"/>
</dbReference>
<dbReference type="CDD" id="cd01748">
    <property type="entry name" value="GATase1_IGP_Synthase"/>
    <property type="match status" value="1"/>
</dbReference>
<dbReference type="FunFam" id="3.40.50.880:FF:000056">
    <property type="entry name" value="Imidazole glycerol phosphate synthase subunit HisH"/>
    <property type="match status" value="1"/>
</dbReference>
<dbReference type="Gene3D" id="3.40.50.880">
    <property type="match status" value="1"/>
</dbReference>
<dbReference type="HAMAP" id="MF_00278">
    <property type="entry name" value="HisH"/>
    <property type="match status" value="1"/>
</dbReference>
<dbReference type="InterPro" id="IPR029062">
    <property type="entry name" value="Class_I_gatase-like"/>
</dbReference>
<dbReference type="InterPro" id="IPR017926">
    <property type="entry name" value="GATASE"/>
</dbReference>
<dbReference type="InterPro" id="IPR010139">
    <property type="entry name" value="Imidazole-glycPsynth_HisH"/>
</dbReference>
<dbReference type="NCBIfam" id="TIGR01855">
    <property type="entry name" value="IMP_synth_hisH"/>
    <property type="match status" value="1"/>
</dbReference>
<dbReference type="PANTHER" id="PTHR42701">
    <property type="entry name" value="IMIDAZOLE GLYCEROL PHOSPHATE SYNTHASE SUBUNIT HISH"/>
    <property type="match status" value="1"/>
</dbReference>
<dbReference type="PANTHER" id="PTHR42701:SF1">
    <property type="entry name" value="IMIDAZOLE GLYCEROL PHOSPHATE SYNTHASE SUBUNIT HISH"/>
    <property type="match status" value="1"/>
</dbReference>
<dbReference type="Pfam" id="PF00117">
    <property type="entry name" value="GATase"/>
    <property type="match status" value="1"/>
</dbReference>
<dbReference type="PIRSF" id="PIRSF000495">
    <property type="entry name" value="Amidotransf_hisH"/>
    <property type="match status" value="1"/>
</dbReference>
<dbReference type="SUPFAM" id="SSF52317">
    <property type="entry name" value="Class I glutamine amidotransferase-like"/>
    <property type="match status" value="1"/>
</dbReference>
<dbReference type="PROSITE" id="PS51273">
    <property type="entry name" value="GATASE_TYPE_1"/>
    <property type="match status" value="1"/>
</dbReference>
<gene>
    <name evidence="1" type="primary">hisH</name>
    <name type="ordered locus">SAV_6157</name>
</gene>
<reference key="1">
    <citation type="journal article" date="2001" name="Proc. Natl. Acad. Sci. U.S.A.">
        <title>Genome sequence of an industrial microorganism Streptomyces avermitilis: deducing the ability of producing secondary metabolites.</title>
        <authorList>
            <person name="Omura S."/>
            <person name="Ikeda H."/>
            <person name="Ishikawa J."/>
            <person name="Hanamoto A."/>
            <person name="Takahashi C."/>
            <person name="Shinose M."/>
            <person name="Takahashi Y."/>
            <person name="Horikawa H."/>
            <person name="Nakazawa H."/>
            <person name="Osonoe T."/>
            <person name="Kikuchi H."/>
            <person name="Shiba T."/>
            <person name="Sakaki Y."/>
            <person name="Hattori M."/>
        </authorList>
    </citation>
    <scope>NUCLEOTIDE SEQUENCE [LARGE SCALE GENOMIC DNA]</scope>
    <source>
        <strain>ATCC 31267 / DSM 46492 / JCM 5070 / NBRC 14893 / NCIMB 12804 / NRRL 8165 / MA-4680</strain>
    </source>
</reference>
<reference key="2">
    <citation type="journal article" date="2003" name="Nat. Biotechnol.">
        <title>Complete genome sequence and comparative analysis of the industrial microorganism Streptomyces avermitilis.</title>
        <authorList>
            <person name="Ikeda H."/>
            <person name="Ishikawa J."/>
            <person name="Hanamoto A."/>
            <person name="Shinose M."/>
            <person name="Kikuchi H."/>
            <person name="Shiba T."/>
            <person name="Sakaki Y."/>
            <person name="Hattori M."/>
            <person name="Omura S."/>
        </authorList>
    </citation>
    <scope>NUCLEOTIDE SEQUENCE [LARGE SCALE GENOMIC DNA]</scope>
    <source>
        <strain>ATCC 31267 / DSM 46492 / JCM 5070 / NBRC 14893 / NCIMB 12804 / NRRL 8165 / MA-4680</strain>
    </source>
</reference>
<accession>Q82AA2</accession>
<evidence type="ECO:0000255" key="1">
    <source>
        <dbReference type="HAMAP-Rule" id="MF_00278"/>
    </source>
</evidence>
<proteinExistence type="inferred from homology"/>